<comment type="function">
    <text evidence="6">May be involved in the biosynthesis of ascorbic acid.</text>
</comment>
<comment type="catalytic activity">
    <reaction evidence="5">
        <text>L-gulono-1,4-lactone + O2 = L-ascorbate + H2O2 + H(+)</text>
        <dbReference type="Rhea" id="RHEA:32363"/>
        <dbReference type="ChEBI" id="CHEBI:15378"/>
        <dbReference type="ChEBI" id="CHEBI:15379"/>
        <dbReference type="ChEBI" id="CHEBI:16240"/>
        <dbReference type="ChEBI" id="CHEBI:17587"/>
        <dbReference type="ChEBI" id="CHEBI:38290"/>
        <dbReference type="EC" id="1.1.3.8"/>
    </reaction>
</comment>
<comment type="cofactor">
    <cofactor evidence="1">
        <name>FAD</name>
        <dbReference type="ChEBI" id="CHEBI:57692"/>
    </cofactor>
</comment>
<comment type="pathway">
    <text evidence="6">Cofactor biosynthesis; L-ascorbate biosynthesis.</text>
</comment>
<comment type="similarity">
    <text evidence="5">Belongs to the oxygen-dependent FAD-linked oxidoreductase family.</text>
</comment>
<comment type="sequence caution" evidence="5">
    <conflict type="erroneous gene model prediction">
        <sequence resource="EMBL-CDS" id="AAF81326"/>
    </conflict>
</comment>
<feature type="signal peptide" evidence="2">
    <location>
        <begin position="1"/>
        <end position="18"/>
    </location>
</feature>
<feature type="chain" id="PRO_0000432502" description="Probable L-gulonolactone oxidase 1" evidence="2">
    <location>
        <begin position="19"/>
        <end position="595"/>
    </location>
</feature>
<feature type="domain" description="FAD-binding PCMH-type" evidence="3">
    <location>
        <begin position="47"/>
        <end position="229"/>
    </location>
</feature>
<organism evidence="10">
    <name type="scientific">Arabidopsis thaliana</name>
    <name type="common">Mouse-ear cress</name>
    <dbReference type="NCBI Taxonomy" id="3702"/>
    <lineage>
        <taxon>Eukaryota</taxon>
        <taxon>Viridiplantae</taxon>
        <taxon>Streptophyta</taxon>
        <taxon>Embryophyta</taxon>
        <taxon>Tracheophyta</taxon>
        <taxon>Spermatophyta</taxon>
        <taxon>Magnoliopsida</taxon>
        <taxon>eudicotyledons</taxon>
        <taxon>Gunneridae</taxon>
        <taxon>Pentapetalae</taxon>
        <taxon>rosids</taxon>
        <taxon>malvids</taxon>
        <taxon>Brassicales</taxon>
        <taxon>Brassicaceae</taxon>
        <taxon>Camelineae</taxon>
        <taxon>Arabidopsis</taxon>
    </lineage>
</organism>
<sequence>MAFWLSLIFFCFCTFASSTPPDDPVKCESGNNMCTVTNSYGAFPDRSICEAAKVEYPKTEAELVSIVAAATRAGQKVRVVTRYVHSIPKLVCTDGKDGVLISTKFLNNVVGTNPEAKTLTVESGVTLRQLIGEAAELELALPHAPYWWGLTVGGLMGTGAHGSSLWGKGSAVHDYVSEIRMVSPGLASDGYVKVRVLSETIDPDEFRAAKVSLGVLGVISQVTFQLQPMFKRSLTFVMQNDSDFGDQAVTFGEKHEFADFLWLPSQGKVVYRMDDRVPVNTSGNGLFDFFPFRPQLSVALAIIRSLEESEESSGDANDKCARAEQITSFLFSISYGVTNNGMEFTGYPVIGKQNHMMSSGTCLDSHQDGLITSCPWDPRIKGQFFHQTAFSIPLTRVKGFINDIKALVKIEPKSLCALERSNGILIRYVTSSPAFLGKEEKALDFDLTYYRSKDDPLAPRLYEDFIEEIEQMAIFKYNALPHWGKNRNLAFDGVIRKYKNANTFLKVKERFDPLGLFSTEWTNQILGLKGNVTIVKEGCALEGLCVCSDDAHCAPKKGYLCRPGKVYTKARVCTHVKSVNGYDDHTKFNLMFNRI</sequence>
<accession>Q9C614</accession>
<accession>Q9LQM9</accession>
<keyword id="KW-0060">Ascorbate biosynthesis</keyword>
<keyword id="KW-0274">FAD</keyword>
<keyword id="KW-0285">Flavoprotein</keyword>
<keyword id="KW-0560">Oxidoreductase</keyword>
<keyword id="KW-1185">Reference proteome</keyword>
<keyword id="KW-0732">Signal</keyword>
<name>GGLO1_ARATH</name>
<protein>
    <recommendedName>
        <fullName evidence="4">Probable L-gulonolactone oxidase 1</fullName>
        <shortName evidence="4">AtGulLO1</shortName>
        <ecNumber evidence="5">1.1.3.8</ecNumber>
    </recommendedName>
</protein>
<evidence type="ECO:0000250" key="1">
    <source>
        <dbReference type="UniProtKB" id="P58710"/>
    </source>
</evidence>
<evidence type="ECO:0000255" key="2"/>
<evidence type="ECO:0000255" key="3">
    <source>
        <dbReference type="PROSITE-ProRule" id="PRU00718"/>
    </source>
</evidence>
<evidence type="ECO:0000303" key="4">
    <source>
    </source>
</evidence>
<evidence type="ECO:0000305" key="5"/>
<evidence type="ECO:0000305" key="6">
    <source>
    </source>
</evidence>
<evidence type="ECO:0000312" key="7">
    <source>
        <dbReference type="Araport" id="AT1G32300"/>
    </source>
</evidence>
<evidence type="ECO:0000312" key="8">
    <source>
        <dbReference type="EMBL" id="AAF81326.1"/>
    </source>
</evidence>
<evidence type="ECO:0000312" key="9">
    <source>
        <dbReference type="EMBL" id="AAG60168.1"/>
    </source>
</evidence>
<evidence type="ECO:0000312" key="10">
    <source>
        <dbReference type="Proteomes" id="UP000006548"/>
    </source>
</evidence>
<proteinExistence type="inferred from homology"/>
<dbReference type="EC" id="1.1.3.8" evidence="5"/>
<dbReference type="EMBL" id="AC007767">
    <property type="protein sequence ID" value="AAF81326.1"/>
    <property type="status" value="ALT_SEQ"/>
    <property type="molecule type" value="Genomic_DNA"/>
</dbReference>
<dbReference type="EMBL" id="AC084110">
    <property type="protein sequence ID" value="AAG60168.1"/>
    <property type="molecule type" value="Genomic_DNA"/>
</dbReference>
<dbReference type="EMBL" id="CP002684">
    <property type="protein sequence ID" value="AEE31461.1"/>
    <property type="molecule type" value="Genomic_DNA"/>
</dbReference>
<dbReference type="PIR" id="F86447">
    <property type="entry name" value="F86447"/>
</dbReference>
<dbReference type="RefSeq" id="NP_564393.1">
    <property type="nucleotide sequence ID" value="NM_102963.2"/>
</dbReference>
<dbReference type="SMR" id="Q9C614"/>
<dbReference type="FunCoup" id="Q9C614">
    <property type="interactions" value="267"/>
</dbReference>
<dbReference type="STRING" id="3702.Q9C614"/>
<dbReference type="iPTMnet" id="Q9C614"/>
<dbReference type="PaxDb" id="3702-AT1G32300.1"/>
<dbReference type="ProteomicsDB" id="221838"/>
<dbReference type="EnsemblPlants" id="AT1G32300.1">
    <property type="protein sequence ID" value="AT1G32300.1"/>
    <property type="gene ID" value="AT1G32300"/>
</dbReference>
<dbReference type="GeneID" id="840122"/>
<dbReference type="Gramene" id="AT1G32300.1">
    <property type="protein sequence ID" value="AT1G32300.1"/>
    <property type="gene ID" value="AT1G32300"/>
</dbReference>
<dbReference type="KEGG" id="ath:AT1G32300"/>
<dbReference type="Araport" id="AT1G32300"/>
<dbReference type="TAIR" id="AT1G32300">
    <property type="gene designation" value="GULLO1"/>
</dbReference>
<dbReference type="eggNOG" id="KOG4730">
    <property type="taxonomic scope" value="Eukaryota"/>
</dbReference>
<dbReference type="HOGENOM" id="CLU_019762_2_0_1"/>
<dbReference type="InParanoid" id="Q9C614"/>
<dbReference type="OMA" id="YCIFLIM"/>
<dbReference type="PhylomeDB" id="Q9C614"/>
<dbReference type="UniPathway" id="UPA00132"/>
<dbReference type="PRO" id="PR:Q9C614"/>
<dbReference type="Proteomes" id="UP000006548">
    <property type="component" value="Chromosome 1"/>
</dbReference>
<dbReference type="ExpressionAtlas" id="Q9C614">
    <property type="expression patterns" value="baseline and differential"/>
</dbReference>
<dbReference type="GO" id="GO:0016020">
    <property type="term" value="C:membrane"/>
    <property type="evidence" value="ECO:0007669"/>
    <property type="project" value="InterPro"/>
</dbReference>
<dbReference type="GO" id="GO:0003885">
    <property type="term" value="F:D-arabinono-1,4-lactone oxidase activity"/>
    <property type="evidence" value="ECO:0007669"/>
    <property type="project" value="InterPro"/>
</dbReference>
<dbReference type="GO" id="GO:0071949">
    <property type="term" value="F:FAD binding"/>
    <property type="evidence" value="ECO:0007669"/>
    <property type="project" value="InterPro"/>
</dbReference>
<dbReference type="GO" id="GO:0050105">
    <property type="term" value="F:L-gulonolactone oxidase activity"/>
    <property type="evidence" value="ECO:0007669"/>
    <property type="project" value="UniProtKB-EC"/>
</dbReference>
<dbReference type="GO" id="GO:0019853">
    <property type="term" value="P:L-ascorbic acid biosynthetic process"/>
    <property type="evidence" value="ECO:0007669"/>
    <property type="project" value="UniProtKB-UniPathway"/>
</dbReference>
<dbReference type="FunFam" id="3.30.465.10:FF:000033">
    <property type="entry name" value="L-gulonolactone oxidase 5"/>
    <property type="match status" value="1"/>
</dbReference>
<dbReference type="Gene3D" id="3.30.465.10">
    <property type="match status" value="1"/>
</dbReference>
<dbReference type="Gene3D" id="3.30.43.10">
    <property type="entry name" value="Uridine Diphospho-n-acetylenolpyruvylglucosamine Reductase, domain 2"/>
    <property type="match status" value="1"/>
</dbReference>
<dbReference type="InterPro" id="IPR007173">
    <property type="entry name" value="ALO_C"/>
</dbReference>
<dbReference type="InterPro" id="IPR016166">
    <property type="entry name" value="FAD-bd_PCMH"/>
</dbReference>
<dbReference type="InterPro" id="IPR036318">
    <property type="entry name" value="FAD-bd_PCMH-like_sf"/>
</dbReference>
<dbReference type="InterPro" id="IPR016167">
    <property type="entry name" value="FAD-bd_PCMH_sub1"/>
</dbReference>
<dbReference type="InterPro" id="IPR016169">
    <property type="entry name" value="FAD-bd_PCMH_sub2"/>
</dbReference>
<dbReference type="InterPro" id="IPR050432">
    <property type="entry name" value="FAD-linked_Oxidoreductases_BP"/>
</dbReference>
<dbReference type="InterPro" id="IPR055154">
    <property type="entry name" value="GULLO2-like_C"/>
</dbReference>
<dbReference type="InterPro" id="IPR010030">
    <property type="entry name" value="GULO_Plant"/>
</dbReference>
<dbReference type="InterPro" id="IPR006094">
    <property type="entry name" value="Oxid_FAD_bind_N"/>
</dbReference>
<dbReference type="NCBIfam" id="TIGR01677">
    <property type="entry name" value="pln_FAD_oxido"/>
    <property type="match status" value="1"/>
</dbReference>
<dbReference type="PANTHER" id="PTHR13878">
    <property type="entry name" value="GULONOLACTONE OXIDASE"/>
    <property type="match status" value="1"/>
</dbReference>
<dbReference type="PANTHER" id="PTHR13878:SF169">
    <property type="entry name" value="L-GULONOLACTONE OXIDASE 1-RELATED"/>
    <property type="match status" value="1"/>
</dbReference>
<dbReference type="Pfam" id="PF04030">
    <property type="entry name" value="ALO"/>
    <property type="match status" value="1"/>
</dbReference>
<dbReference type="Pfam" id="PF01565">
    <property type="entry name" value="FAD_binding_4"/>
    <property type="match status" value="1"/>
</dbReference>
<dbReference type="Pfam" id="PF22906">
    <property type="entry name" value="GULLO2-like_3rd"/>
    <property type="match status" value="1"/>
</dbReference>
<dbReference type="SUPFAM" id="SSF56176">
    <property type="entry name" value="FAD-binding/transporter-associated domain-like"/>
    <property type="match status" value="1"/>
</dbReference>
<dbReference type="PROSITE" id="PS51387">
    <property type="entry name" value="FAD_PCMH"/>
    <property type="match status" value="1"/>
</dbReference>
<reference key="1">
    <citation type="journal article" date="2000" name="Nature">
        <title>Sequence and analysis of chromosome 1 of the plant Arabidopsis thaliana.</title>
        <authorList>
            <person name="Theologis A."/>
            <person name="Ecker J.R."/>
            <person name="Palm C.J."/>
            <person name="Federspiel N.A."/>
            <person name="Kaul S."/>
            <person name="White O."/>
            <person name="Alonso J."/>
            <person name="Altafi H."/>
            <person name="Araujo R."/>
            <person name="Bowman C.L."/>
            <person name="Brooks S.Y."/>
            <person name="Buehler E."/>
            <person name="Chan A."/>
            <person name="Chao Q."/>
            <person name="Chen H."/>
            <person name="Cheuk R.F."/>
            <person name="Chin C.W."/>
            <person name="Chung M.K."/>
            <person name="Conn L."/>
            <person name="Conway A.B."/>
            <person name="Conway A.R."/>
            <person name="Creasy T.H."/>
            <person name="Dewar K."/>
            <person name="Dunn P."/>
            <person name="Etgu P."/>
            <person name="Feldblyum T.V."/>
            <person name="Feng J.-D."/>
            <person name="Fong B."/>
            <person name="Fujii C.Y."/>
            <person name="Gill J.E."/>
            <person name="Goldsmith A.D."/>
            <person name="Haas B."/>
            <person name="Hansen N.F."/>
            <person name="Hughes B."/>
            <person name="Huizar L."/>
            <person name="Hunter J.L."/>
            <person name="Jenkins J."/>
            <person name="Johnson-Hopson C."/>
            <person name="Khan S."/>
            <person name="Khaykin E."/>
            <person name="Kim C.J."/>
            <person name="Koo H.L."/>
            <person name="Kremenetskaia I."/>
            <person name="Kurtz D.B."/>
            <person name="Kwan A."/>
            <person name="Lam B."/>
            <person name="Langin-Hooper S."/>
            <person name="Lee A."/>
            <person name="Lee J.M."/>
            <person name="Lenz C.A."/>
            <person name="Li J.H."/>
            <person name="Li Y.-P."/>
            <person name="Lin X."/>
            <person name="Liu S.X."/>
            <person name="Liu Z.A."/>
            <person name="Luros J.S."/>
            <person name="Maiti R."/>
            <person name="Marziali A."/>
            <person name="Militscher J."/>
            <person name="Miranda M."/>
            <person name="Nguyen M."/>
            <person name="Nierman W.C."/>
            <person name="Osborne B.I."/>
            <person name="Pai G."/>
            <person name="Peterson J."/>
            <person name="Pham P.K."/>
            <person name="Rizzo M."/>
            <person name="Rooney T."/>
            <person name="Rowley D."/>
            <person name="Sakano H."/>
            <person name="Salzberg S.L."/>
            <person name="Schwartz J.R."/>
            <person name="Shinn P."/>
            <person name="Southwick A.M."/>
            <person name="Sun H."/>
            <person name="Tallon L.J."/>
            <person name="Tambunga G."/>
            <person name="Toriumi M.J."/>
            <person name="Town C.D."/>
            <person name="Utterback T."/>
            <person name="Van Aken S."/>
            <person name="Vaysberg M."/>
            <person name="Vysotskaia V.S."/>
            <person name="Walker M."/>
            <person name="Wu D."/>
            <person name="Yu G."/>
            <person name="Fraser C.M."/>
            <person name="Venter J.C."/>
            <person name="Davis R.W."/>
        </authorList>
    </citation>
    <scope>NUCLEOTIDE SEQUENCE [LARGE SCALE GENOMIC DNA]</scope>
    <source>
        <strain>cv. Columbia</strain>
    </source>
</reference>
<reference key="2">
    <citation type="journal article" date="2017" name="Plant J.">
        <title>Araport11: a complete reannotation of the Arabidopsis thaliana reference genome.</title>
        <authorList>
            <person name="Cheng C.Y."/>
            <person name="Krishnakumar V."/>
            <person name="Chan A.P."/>
            <person name="Thibaud-Nissen F."/>
            <person name="Schobel S."/>
            <person name="Town C.D."/>
        </authorList>
    </citation>
    <scope>GENOME REANNOTATION</scope>
    <source>
        <strain>cv. Columbia</strain>
    </source>
</reference>
<reference key="3">
    <citation type="journal article" date="2010" name="Biosci. Biotechnol. Biochem.">
        <title>The contribution of Arabidopsis homologs of L-gulono-1,4-lactone oxidase to the biosynthesis of ascorbic acid.</title>
        <authorList>
            <person name="Maruta T."/>
            <person name="Ichikawa Y."/>
            <person name="Mieda T."/>
            <person name="Takeda T."/>
            <person name="Tamoi M."/>
            <person name="Yabuta Y."/>
            <person name="Ishikawa T."/>
            <person name="Shigeoka S."/>
        </authorList>
    </citation>
    <scope>FUNCTION</scope>
</reference>
<gene>
    <name evidence="4" type="primary">GULLO1</name>
    <name evidence="7" type="ordered locus">At1g32300</name>
    <name evidence="9" type="ORF">F27G20.8</name>
    <name evidence="8" type="ORF">F5D14.6</name>
</gene>